<feature type="chain" id="PRO_0000307674" description="B9 domain-containing protein 2">
    <location>
        <begin position="1"/>
        <end position="175"/>
    </location>
</feature>
<feature type="domain" description="C2 B9-type" evidence="2">
    <location>
        <begin position="2"/>
        <end position="118"/>
    </location>
</feature>
<feature type="sequence variant" id="VAR_087299" description="In MKS10; uncertain significance." evidence="7">
    <original>H</original>
    <variation>Q</variation>
    <location>
        <position position="5"/>
    </location>
</feature>
<feature type="sequence variant" id="VAR_066996" description="In dbSNP:rs2241714." evidence="3 8">
    <original>I</original>
    <variation>M</variation>
    <location>
        <position position="11"/>
    </location>
</feature>
<feature type="sequence variant" id="VAR_080463" description="In JBTS34; uncertain significance; dbSNP:rs757863670." evidence="6">
    <original>L</original>
    <variation>P</variation>
    <location>
        <position position="36"/>
    </location>
</feature>
<feature type="sequence variant" id="VAR_080464" description="In JBTS34; uncertain significance; dbSNP:rs863225150." evidence="6">
    <original>P</original>
    <variation>S</variation>
    <location>
        <position position="74"/>
    </location>
</feature>
<feature type="sequence variant" id="VAR_036626" description="In MKS10; loss-of-function; could not rescue in vitro dosage-dependent ciliary defects; fails to interact with MKS1 although it retains its ability to interact with B9D1; dbSNP:rs1487082103." evidence="5">
    <original>S</original>
    <variation>R</variation>
    <location>
        <position position="101"/>
    </location>
</feature>
<feature type="sequence variant" id="VAR_080465" description="In JBTS34; uncertain significance; dbSNP:rs750436680." evidence="6">
    <original>G</original>
    <variation>S</variation>
    <location>
        <position position="155"/>
    </location>
</feature>
<keyword id="KW-0966">Cell projection</keyword>
<keyword id="KW-1186">Ciliopathy</keyword>
<keyword id="KW-0969">Cilium</keyword>
<keyword id="KW-0970">Cilium biogenesis/degradation</keyword>
<keyword id="KW-0963">Cytoplasm</keyword>
<keyword id="KW-0206">Cytoskeleton</keyword>
<keyword id="KW-0225">Disease variant</keyword>
<keyword id="KW-0979">Joubert syndrome</keyword>
<keyword id="KW-0981">Meckel syndrome</keyword>
<keyword id="KW-0539">Nucleus</keyword>
<keyword id="KW-1267">Proteomics identification</keyword>
<keyword id="KW-1185">Reference proteome</keyword>
<evidence type="ECO:0000250" key="1"/>
<evidence type="ECO:0000255" key="2">
    <source>
        <dbReference type="PROSITE-ProRule" id="PRU00713"/>
    </source>
</evidence>
<evidence type="ECO:0000269" key="3">
    <source>
    </source>
</evidence>
<evidence type="ECO:0000269" key="4">
    <source>
    </source>
</evidence>
<evidence type="ECO:0000269" key="5">
    <source>
    </source>
</evidence>
<evidence type="ECO:0000269" key="6">
    <source>
    </source>
</evidence>
<evidence type="ECO:0000269" key="7">
    <source>
    </source>
</evidence>
<evidence type="ECO:0000269" key="8">
    <source ref="2"/>
</evidence>
<evidence type="ECO:0000305" key="9"/>
<dbReference type="EMBL" id="AC011462">
    <property type="status" value="NOT_ANNOTATED_CDS"/>
    <property type="molecule type" value="Genomic_DNA"/>
</dbReference>
<dbReference type="EMBL" id="CH471126">
    <property type="protein sequence ID" value="EAW57034.1"/>
    <property type="molecule type" value="Genomic_DNA"/>
</dbReference>
<dbReference type="EMBL" id="BC004157">
    <property type="protein sequence ID" value="AAH04157.1"/>
    <property type="molecule type" value="mRNA"/>
</dbReference>
<dbReference type="EMBL" id="BC004444">
    <property type="protein sequence ID" value="AAH04444.1"/>
    <property type="molecule type" value="mRNA"/>
</dbReference>
<dbReference type="CCDS" id="CCDS12579.1"/>
<dbReference type="RefSeq" id="NP_085055.2">
    <property type="nucleotide sequence ID" value="NM_030578.4"/>
</dbReference>
<dbReference type="RefSeq" id="XP_011525651.1">
    <property type="nucleotide sequence ID" value="XM_011527349.3"/>
</dbReference>
<dbReference type="BioGRID" id="123308">
    <property type="interactions" value="72"/>
</dbReference>
<dbReference type="ComplexPortal" id="CPX-2531">
    <property type="entry name" value="MKS transition zone complex"/>
</dbReference>
<dbReference type="CORUM" id="Q9BPU9"/>
<dbReference type="FunCoup" id="Q9BPU9">
    <property type="interactions" value="274"/>
</dbReference>
<dbReference type="IntAct" id="Q9BPU9">
    <property type="interactions" value="74"/>
</dbReference>
<dbReference type="MINT" id="Q9BPU9"/>
<dbReference type="STRING" id="9606.ENSP00000243578"/>
<dbReference type="BioMuta" id="B9D2"/>
<dbReference type="DMDM" id="221222440"/>
<dbReference type="jPOST" id="Q9BPU9"/>
<dbReference type="MassIVE" id="Q9BPU9"/>
<dbReference type="PaxDb" id="9606-ENSP00000243578"/>
<dbReference type="PeptideAtlas" id="Q9BPU9"/>
<dbReference type="ProteomicsDB" id="78574"/>
<dbReference type="Pumba" id="Q9BPU9"/>
<dbReference type="Antibodypedia" id="48740">
    <property type="antibodies" value="34 antibodies from 13 providers"/>
</dbReference>
<dbReference type="DNASU" id="80776"/>
<dbReference type="Ensembl" id="ENST00000243578.8">
    <property type="protein sequence ID" value="ENSP00000243578.2"/>
    <property type="gene ID" value="ENSG00000123810.9"/>
</dbReference>
<dbReference type="Ensembl" id="ENST00000675972.1">
    <property type="protein sequence ID" value="ENSP00000501911.1"/>
    <property type="gene ID" value="ENSG00000123810.9"/>
</dbReference>
<dbReference type="GeneID" id="80776"/>
<dbReference type="KEGG" id="hsa:80776"/>
<dbReference type="MANE-Select" id="ENST00000243578.8">
    <property type="protein sequence ID" value="ENSP00000243578.2"/>
    <property type="RefSeq nucleotide sequence ID" value="NM_030578.4"/>
    <property type="RefSeq protein sequence ID" value="NP_085055.2"/>
</dbReference>
<dbReference type="UCSC" id="uc002oqj.3">
    <property type="organism name" value="human"/>
</dbReference>
<dbReference type="AGR" id="HGNC:28636"/>
<dbReference type="CTD" id="80776"/>
<dbReference type="DisGeNET" id="80776"/>
<dbReference type="GeneCards" id="B9D2"/>
<dbReference type="GeneReviews" id="B9D2"/>
<dbReference type="HGNC" id="HGNC:28636">
    <property type="gene designation" value="B9D2"/>
</dbReference>
<dbReference type="HPA" id="ENSG00000123810">
    <property type="expression patterns" value="Low tissue specificity"/>
</dbReference>
<dbReference type="MalaCards" id="B9D2"/>
<dbReference type="MIM" id="611951">
    <property type="type" value="gene"/>
</dbReference>
<dbReference type="MIM" id="614175">
    <property type="type" value="phenotype"/>
</dbReference>
<dbReference type="neXtProt" id="NX_Q9BPU9"/>
<dbReference type="OpenTargets" id="ENSG00000123810"/>
<dbReference type="Orphanet" id="475">
    <property type="disease" value="Joubert syndrome"/>
</dbReference>
<dbReference type="Orphanet" id="564">
    <property type="disease" value="Meckel syndrome"/>
</dbReference>
<dbReference type="PharmGKB" id="PA162377347"/>
<dbReference type="VEuPathDB" id="HostDB:ENSG00000123810"/>
<dbReference type="eggNOG" id="KOG4028">
    <property type="taxonomic scope" value="Eukaryota"/>
</dbReference>
<dbReference type="GeneTree" id="ENSGT00940000161428"/>
<dbReference type="HOGENOM" id="CLU_084934_2_1_1"/>
<dbReference type="InParanoid" id="Q9BPU9"/>
<dbReference type="OMA" id="DVAYWCH"/>
<dbReference type="OrthoDB" id="184109at2759"/>
<dbReference type="PAN-GO" id="Q9BPU9">
    <property type="GO annotations" value="2 GO annotations based on evolutionary models"/>
</dbReference>
<dbReference type="PhylomeDB" id="Q9BPU9"/>
<dbReference type="TreeFam" id="TF314883"/>
<dbReference type="PathwayCommons" id="Q9BPU9"/>
<dbReference type="Reactome" id="R-HSA-141444">
    <property type="pathway name" value="Amplification of signal from unattached kinetochores via a MAD2 inhibitory signal"/>
</dbReference>
<dbReference type="Reactome" id="R-HSA-2467813">
    <property type="pathway name" value="Separation of Sister Chromatids"/>
</dbReference>
<dbReference type="Reactome" id="R-HSA-2500257">
    <property type="pathway name" value="Resolution of Sister Chromatid Cohesion"/>
</dbReference>
<dbReference type="Reactome" id="R-HSA-5620912">
    <property type="pathway name" value="Anchoring of the basal body to the plasma membrane"/>
</dbReference>
<dbReference type="Reactome" id="R-HSA-5663220">
    <property type="pathway name" value="RHO GTPases Activate Formins"/>
</dbReference>
<dbReference type="Reactome" id="R-HSA-68877">
    <property type="pathway name" value="Mitotic Prometaphase"/>
</dbReference>
<dbReference type="Reactome" id="R-HSA-9648025">
    <property type="pathway name" value="EML4 and NUDC in mitotic spindle formation"/>
</dbReference>
<dbReference type="SignaLink" id="Q9BPU9"/>
<dbReference type="BioGRID-ORCS" id="80776">
    <property type="hits" value="11 hits in 1165 CRISPR screens"/>
</dbReference>
<dbReference type="ChiTaRS" id="B9D2">
    <property type="organism name" value="human"/>
</dbReference>
<dbReference type="GenomeRNAi" id="80776"/>
<dbReference type="Pharos" id="Q9BPU9">
    <property type="development level" value="Tbio"/>
</dbReference>
<dbReference type="PRO" id="PR:Q9BPU9"/>
<dbReference type="Proteomes" id="UP000005640">
    <property type="component" value="Chromosome 19"/>
</dbReference>
<dbReference type="RNAct" id="Q9BPU9">
    <property type="molecule type" value="protein"/>
</dbReference>
<dbReference type="Bgee" id="ENSG00000123810">
    <property type="expression patterns" value="Expressed in right uterine tube and 97 other cell types or tissues"/>
</dbReference>
<dbReference type="ExpressionAtlas" id="Q9BPU9">
    <property type="expression patterns" value="baseline and differential"/>
</dbReference>
<dbReference type="GO" id="GO:0005813">
    <property type="term" value="C:centrosome"/>
    <property type="evidence" value="ECO:0000314"/>
    <property type="project" value="UniProtKB"/>
</dbReference>
<dbReference type="GO" id="GO:0036064">
    <property type="term" value="C:ciliary basal body"/>
    <property type="evidence" value="ECO:0000314"/>
    <property type="project" value="UniProtKB"/>
</dbReference>
<dbReference type="GO" id="GO:0005829">
    <property type="term" value="C:cytosol"/>
    <property type="evidence" value="ECO:0000304"/>
    <property type="project" value="Reactome"/>
</dbReference>
<dbReference type="GO" id="GO:0016020">
    <property type="term" value="C:membrane"/>
    <property type="evidence" value="ECO:0007669"/>
    <property type="project" value="Ensembl"/>
</dbReference>
<dbReference type="GO" id="GO:0036038">
    <property type="term" value="C:MKS complex"/>
    <property type="evidence" value="ECO:0000250"/>
    <property type="project" value="UniProtKB"/>
</dbReference>
<dbReference type="GO" id="GO:0005634">
    <property type="term" value="C:nucleus"/>
    <property type="evidence" value="ECO:0007669"/>
    <property type="project" value="UniProtKB-SubCell"/>
</dbReference>
<dbReference type="GO" id="GO:0043015">
    <property type="term" value="F:gamma-tubulin binding"/>
    <property type="evidence" value="ECO:0000250"/>
    <property type="project" value="UniProtKB"/>
</dbReference>
<dbReference type="GO" id="GO:0060271">
    <property type="term" value="P:cilium assembly"/>
    <property type="evidence" value="ECO:0000250"/>
    <property type="project" value="UniProtKB"/>
</dbReference>
<dbReference type="InterPro" id="IPR010796">
    <property type="entry name" value="C2_B9-type_dom"/>
</dbReference>
<dbReference type="PANTHER" id="PTHR12968">
    <property type="entry name" value="B9 DOMAIN-CONTAINING"/>
    <property type="match status" value="1"/>
</dbReference>
<dbReference type="PANTHER" id="PTHR12968:SF2">
    <property type="entry name" value="B9 DOMAIN-CONTAINING PROTEIN 2"/>
    <property type="match status" value="1"/>
</dbReference>
<dbReference type="Pfam" id="PF07162">
    <property type="entry name" value="B9-C2"/>
    <property type="match status" value="1"/>
</dbReference>
<dbReference type="PROSITE" id="PS51381">
    <property type="entry name" value="C2_B9"/>
    <property type="match status" value="1"/>
</dbReference>
<sequence length="175" mass="19261">MAEVHVIGQIIGASGFSESSLFCKWGIHTGAAWKLLSGVREGQTQVDTPQIGDMAYWSHPIDLHFATKGLQGWPRLHFQVWSQDSFGRCQLAGYGFCHVPSSPGTHQLACPTWRPLGSWREQLARAFVGGGPQLLHGDTIYSGADRYRLHTAAGGTVHLEIGLLLRNFDRYGVEC</sequence>
<organism>
    <name type="scientific">Homo sapiens</name>
    <name type="common">Human</name>
    <dbReference type="NCBI Taxonomy" id="9606"/>
    <lineage>
        <taxon>Eukaryota</taxon>
        <taxon>Metazoa</taxon>
        <taxon>Chordata</taxon>
        <taxon>Craniata</taxon>
        <taxon>Vertebrata</taxon>
        <taxon>Euteleostomi</taxon>
        <taxon>Mammalia</taxon>
        <taxon>Eutheria</taxon>
        <taxon>Euarchontoglires</taxon>
        <taxon>Primates</taxon>
        <taxon>Haplorrhini</taxon>
        <taxon>Catarrhini</taxon>
        <taxon>Hominidae</taxon>
        <taxon>Homo</taxon>
    </lineage>
</organism>
<protein>
    <recommendedName>
        <fullName>B9 domain-containing protein 2</fullName>
    </recommendedName>
    <alternativeName>
        <fullName>MKS1-related protein 2</fullName>
    </alternativeName>
</protein>
<name>B9D2_HUMAN</name>
<gene>
    <name type="primary">B9D2</name>
    <name type="synonym">MKSR2</name>
</gene>
<proteinExistence type="evidence at protein level"/>
<reference key="1">
    <citation type="journal article" date="2004" name="Nature">
        <title>The DNA sequence and biology of human chromosome 19.</title>
        <authorList>
            <person name="Grimwood J."/>
            <person name="Gordon L.A."/>
            <person name="Olsen A.S."/>
            <person name="Terry A."/>
            <person name="Schmutz J."/>
            <person name="Lamerdin J.E."/>
            <person name="Hellsten U."/>
            <person name="Goodstein D."/>
            <person name="Couronne O."/>
            <person name="Tran-Gyamfi M."/>
            <person name="Aerts A."/>
            <person name="Altherr M."/>
            <person name="Ashworth L."/>
            <person name="Bajorek E."/>
            <person name="Black S."/>
            <person name="Branscomb E."/>
            <person name="Caenepeel S."/>
            <person name="Carrano A.V."/>
            <person name="Caoile C."/>
            <person name="Chan Y.M."/>
            <person name="Christensen M."/>
            <person name="Cleland C.A."/>
            <person name="Copeland A."/>
            <person name="Dalin E."/>
            <person name="Dehal P."/>
            <person name="Denys M."/>
            <person name="Detter J.C."/>
            <person name="Escobar J."/>
            <person name="Flowers D."/>
            <person name="Fotopulos D."/>
            <person name="Garcia C."/>
            <person name="Georgescu A.M."/>
            <person name="Glavina T."/>
            <person name="Gomez M."/>
            <person name="Gonzales E."/>
            <person name="Groza M."/>
            <person name="Hammon N."/>
            <person name="Hawkins T."/>
            <person name="Haydu L."/>
            <person name="Ho I."/>
            <person name="Huang W."/>
            <person name="Israni S."/>
            <person name="Jett J."/>
            <person name="Kadner K."/>
            <person name="Kimball H."/>
            <person name="Kobayashi A."/>
            <person name="Larionov V."/>
            <person name="Leem S.-H."/>
            <person name="Lopez F."/>
            <person name="Lou Y."/>
            <person name="Lowry S."/>
            <person name="Malfatti S."/>
            <person name="Martinez D."/>
            <person name="McCready P.M."/>
            <person name="Medina C."/>
            <person name="Morgan J."/>
            <person name="Nelson K."/>
            <person name="Nolan M."/>
            <person name="Ovcharenko I."/>
            <person name="Pitluck S."/>
            <person name="Pollard M."/>
            <person name="Popkie A.P."/>
            <person name="Predki P."/>
            <person name="Quan G."/>
            <person name="Ramirez L."/>
            <person name="Rash S."/>
            <person name="Retterer J."/>
            <person name="Rodriguez A."/>
            <person name="Rogers S."/>
            <person name="Salamov A."/>
            <person name="Salazar A."/>
            <person name="She X."/>
            <person name="Smith D."/>
            <person name="Slezak T."/>
            <person name="Solovyev V."/>
            <person name="Thayer N."/>
            <person name="Tice H."/>
            <person name="Tsai M."/>
            <person name="Ustaszewska A."/>
            <person name="Vo N."/>
            <person name="Wagner M."/>
            <person name="Wheeler J."/>
            <person name="Wu K."/>
            <person name="Xie G."/>
            <person name="Yang J."/>
            <person name="Dubchak I."/>
            <person name="Furey T.S."/>
            <person name="DeJong P."/>
            <person name="Dickson M."/>
            <person name="Gordon D."/>
            <person name="Eichler E.E."/>
            <person name="Pennacchio L.A."/>
            <person name="Richardson P."/>
            <person name="Stubbs L."/>
            <person name="Rokhsar D.S."/>
            <person name="Myers R.M."/>
            <person name="Rubin E.M."/>
            <person name="Lucas S.M."/>
        </authorList>
    </citation>
    <scope>NUCLEOTIDE SEQUENCE [LARGE SCALE GENOMIC DNA]</scope>
</reference>
<reference key="2">
    <citation type="submission" date="2005-07" db="EMBL/GenBank/DDBJ databases">
        <authorList>
            <person name="Mural R.J."/>
            <person name="Istrail S."/>
            <person name="Sutton G.G."/>
            <person name="Florea L."/>
            <person name="Halpern A.L."/>
            <person name="Mobarry C.M."/>
            <person name="Lippert R."/>
            <person name="Walenz B."/>
            <person name="Shatkay H."/>
            <person name="Dew I."/>
            <person name="Miller J.R."/>
            <person name="Flanigan M.J."/>
            <person name="Edwards N.J."/>
            <person name="Bolanos R."/>
            <person name="Fasulo D."/>
            <person name="Halldorsson B.V."/>
            <person name="Hannenhalli S."/>
            <person name="Turner R."/>
            <person name="Yooseph S."/>
            <person name="Lu F."/>
            <person name="Nusskern D.R."/>
            <person name="Shue B.C."/>
            <person name="Zheng X.H."/>
            <person name="Zhong F."/>
            <person name="Delcher A.L."/>
            <person name="Huson D.H."/>
            <person name="Kravitz S.A."/>
            <person name="Mouchard L."/>
            <person name="Reinert K."/>
            <person name="Remington K.A."/>
            <person name="Clark A.G."/>
            <person name="Waterman M.S."/>
            <person name="Eichler E.E."/>
            <person name="Adams M.D."/>
            <person name="Hunkapiller M.W."/>
            <person name="Myers E.W."/>
            <person name="Venter J.C."/>
        </authorList>
    </citation>
    <scope>NUCLEOTIDE SEQUENCE [LARGE SCALE GENOMIC DNA]</scope>
    <scope>VARIANT MET-11</scope>
</reference>
<reference key="3">
    <citation type="journal article" date="2004" name="Genome Res.">
        <title>The status, quality, and expansion of the NIH full-length cDNA project: the Mammalian Gene Collection (MGC).</title>
        <authorList>
            <consortium name="The MGC Project Team"/>
        </authorList>
    </citation>
    <scope>NUCLEOTIDE SEQUENCE [LARGE SCALE MRNA]</scope>
    <scope>VARIANT MET-11</scope>
    <source>
        <tissue>Lung</tissue>
    </source>
</reference>
<reference key="4">
    <citation type="journal article" date="2009" name="J. Cell Sci.">
        <title>Functional interactions between the ciliopathy-associated Meckel syndrome 1 (MKS1) protein and two novel MKS1-related (MKSR) proteins.</title>
        <authorList>
            <person name="Bialas N.J."/>
            <person name="Inglis P.N."/>
            <person name="Li C."/>
            <person name="Robinson J.F."/>
            <person name="Parker J.D."/>
            <person name="Healey M.P."/>
            <person name="Davis E.E."/>
            <person name="Inglis C.D."/>
            <person name="Toivonen T."/>
            <person name="Cottell D.C."/>
            <person name="Blacque O.E."/>
            <person name="Quarmby L.M."/>
            <person name="Katsanis N."/>
            <person name="Leroux M.R."/>
        </authorList>
    </citation>
    <scope>SUBCELLULAR LOCATION</scope>
</reference>
<reference key="5">
    <citation type="journal article" date="2011" name="Am. J. Hum. Genet.">
        <title>Disruption of a ciliary B9 protein complex causes Meckel syndrome.</title>
        <authorList>
            <person name="Dowdle W.E."/>
            <person name="Robinson J.F."/>
            <person name="Kneist A."/>
            <person name="Sirerol-Piquer M.S."/>
            <person name="Frints S.G."/>
            <person name="Corbit K.C."/>
            <person name="Zaghloul N.A."/>
            <person name="van Lijnschoten G."/>
            <person name="Mulders L."/>
            <person name="Verver D.E."/>
            <person name="Zerres K."/>
            <person name="Reed R.R."/>
            <person name="Attie-Bitach T."/>
            <person name="Johnson C.A."/>
            <person name="Garcia-Verdugo J.M."/>
            <person name="Katsanis N."/>
            <person name="Bergmann C."/>
            <person name="Reiter J.F."/>
        </authorList>
    </citation>
    <scope>FUNCTION</scope>
    <scope>VARIANT MKS10 ARG-101</scope>
    <scope>CHARACTERIZATION OF VARIANT MKS10 ARG-101</scope>
</reference>
<reference key="6">
    <citation type="journal article" date="2011" name="Am. J. Hum. Genet.">
        <authorList>
            <person name="Dowdle W.E."/>
            <person name="Robinson J.F."/>
            <person name="Kneist A."/>
            <person name="Sirerol-Piquer M.S."/>
            <person name="Frints S.G."/>
            <person name="Corbit K.C."/>
            <person name="Zaghloul N.A."/>
            <person name="van Lijnschoten G."/>
            <person name="Mulders L."/>
            <person name="Verver D.E."/>
            <person name="Zerres K."/>
            <person name="Reed R.R."/>
            <person name="Attie-Bitach T."/>
            <person name="Johnson C.A."/>
            <person name="Garcia-Verdugo J.M."/>
            <person name="Katsanis N."/>
            <person name="Bergmann C."/>
            <person name="Reiter J.F."/>
        </authorList>
    </citation>
    <scope>ERRATUM OF PUBMED:21763481</scope>
</reference>
<reference key="7">
    <citation type="journal article" date="2015" name="J. Med. Genet.">
        <title>Joubert syndrome: a model for untangling recessive disorders with extreme genetic heterogeneity.</title>
        <authorList>
            <consortium name="University of Washington Center for Mendelian Genomics"/>
            <person name="Bachmann-Gagescu R."/>
            <person name="Dempsey J.C."/>
            <person name="Phelps I.G."/>
            <person name="O'Roak B.J."/>
            <person name="Knutzen D.M."/>
            <person name="Rue T.C."/>
            <person name="Ishak G.E."/>
            <person name="Isabella C.R."/>
            <person name="Gorden N."/>
            <person name="Adkins J."/>
            <person name="Boyle E.A."/>
            <person name="de Lacy N."/>
            <person name="O'Day D."/>
            <person name="Alswaid A."/>
            <person name="Radha Ramadevi A."/>
            <person name="Lingappa L."/>
            <person name="Lourenco C."/>
            <person name="Martorell L."/>
            <person name="Garcia-Cazorla A."/>
            <person name="Ozyuerek H."/>
            <person name="Haliloglu G."/>
            <person name="Tuysuz B."/>
            <person name="Topcu M."/>
            <person name="Chance P."/>
            <person name="Parisi M.A."/>
            <person name="Glass I.A."/>
            <person name="Shendure J."/>
            <person name="Doherty D."/>
        </authorList>
    </citation>
    <scope>INVOLVEMENT IN JBTS34</scope>
    <scope>VARIANTS JBTS34 PRO-36; SER-74 AND SER-155</scope>
</reference>
<reference key="8">
    <citation type="journal article" date="2019" name="Clin. Genet.">
        <title>Meckel syndrome: Clinical and mutation profile in six fetuses.</title>
        <authorList>
            <person name="Radhakrishnan P."/>
            <person name="Nayak S.S."/>
            <person name="Shukla A."/>
            <person name="Lindstrand A."/>
            <person name="Girisha K.M."/>
        </authorList>
    </citation>
    <scope>VARIANT MKS10 GLN-5</scope>
</reference>
<comment type="function">
    <text evidence="5">Component of the tectonic-like complex, a complex localized at the transition zone of primary cilia and acting as a barrier that prevents diffusion of transmembrane proteins between the cilia and plasma membranes.</text>
</comment>
<comment type="subunit">
    <text evidence="1">Part of the tectonic-like complex (also named B9 complex). Interacts with TUBG1 (By similarity).</text>
</comment>
<comment type="interaction">
    <interactant intactId="EBI-6958971">
        <id>Q9BPU9</id>
    </interactant>
    <interactant intactId="EBI-2878075">
        <id>Q9BT30</id>
        <label>ALKBH7</label>
    </interactant>
    <organismsDiffer>false</organismsDiffer>
    <experiments>3</experiments>
</comment>
<comment type="interaction">
    <interactant intactId="EBI-6958971">
        <id>Q9BPU9</id>
    </interactant>
    <interactant intactId="EBI-372535">
        <id>Q9UPM9</id>
        <label>B9D1</label>
    </interactant>
    <organismsDiffer>false</organismsDiffer>
    <experiments>8</experiments>
</comment>
<comment type="interaction">
    <interactant intactId="EBI-6958971">
        <id>Q9BPU9</id>
    </interactant>
    <interactant intactId="EBI-6958994">
        <id>Q8N4P2</id>
        <label>IFT70B</label>
    </interactant>
    <organismsDiffer>false</organismsDiffer>
    <experiments>2</experiments>
</comment>
<comment type="interaction">
    <interactant intactId="EBI-6958971">
        <id>Q9BPU9</id>
    </interactant>
    <interactant intactId="EBI-751472">
        <id>Q9Y283</id>
        <label>INVS</label>
    </interactant>
    <organismsDiffer>false</organismsDiffer>
    <experiments>4</experiments>
</comment>
<comment type="interaction">
    <interactant intactId="EBI-6958971">
        <id>Q9BPU9</id>
    </interactant>
    <interactant intactId="EBI-719269">
        <id>Q9NXB0</id>
        <label>MKS1</label>
    </interactant>
    <organismsDiffer>false</organismsDiffer>
    <experiments>11</experiments>
</comment>
<comment type="interaction">
    <interactant intactId="EBI-6958971">
        <id>Q9BPU9</id>
    </interactant>
    <interactant intactId="EBI-10181968">
        <id>Q7Z4N8</id>
        <label>P4HA3</label>
    </interactant>
    <organismsDiffer>false</organismsDiffer>
    <experiments>3</experiments>
</comment>
<comment type="interaction">
    <interactant intactId="EBI-6958971">
        <id>Q9BPU9</id>
    </interactant>
    <interactant intactId="EBI-12069346">
        <id>Q6IQ23-2</id>
        <label>PLEKHA7</label>
    </interactant>
    <organismsDiffer>false</organismsDiffer>
    <experiments>3</experiments>
</comment>
<comment type="interaction">
    <interactant intactId="EBI-6958971">
        <id>Q9BPU9</id>
    </interactant>
    <interactant intactId="EBI-347462">
        <id>P47897</id>
        <label>QARS1</label>
    </interactant>
    <organismsDiffer>false</organismsDiffer>
    <experiments>3</experiments>
</comment>
<comment type="interaction">
    <interactant intactId="EBI-6958971">
        <id>Q9BPU9</id>
    </interactant>
    <interactant intactId="EBI-12000762">
        <id>Q7Z5V6-2</id>
        <label>SAXO4</label>
    </interactant>
    <organismsDiffer>false</organismsDiffer>
    <experiments>3</experiments>
</comment>
<comment type="interaction">
    <interactant intactId="EBI-6958971">
        <id>Q9BPU9</id>
    </interactant>
    <interactant intactId="EBI-11959123">
        <id>Q99932-2</id>
        <label>SPAG8</label>
    </interactant>
    <organismsDiffer>false</organismsDiffer>
    <experiments>3</experiments>
</comment>
<comment type="interaction">
    <interactant intactId="EBI-6958971">
        <id>Q9BPU9</id>
    </interactant>
    <interactant intactId="EBI-3939165">
        <id>O43711</id>
        <label>TLX3</label>
    </interactant>
    <organismsDiffer>false</organismsDiffer>
    <experiments>3</experiments>
</comment>
<comment type="interaction">
    <interactant intactId="EBI-6958971">
        <id>Q9BPU9</id>
    </interactant>
    <interactant intactId="EBI-741945">
        <id>Q9BRG1</id>
        <label>VPS25</label>
    </interactant>
    <organismsDiffer>false</organismsDiffer>
    <experiments>3</experiments>
</comment>
<comment type="subcellular location">
    <subcellularLocation>
        <location evidence="4">Cytoplasm</location>
        <location evidence="4">Cytoskeleton</location>
        <location evidence="4">Cilium basal body</location>
    </subcellularLocation>
    <subcellularLocation>
        <location evidence="4">Cytoplasm</location>
        <location evidence="4">Cytoskeleton</location>
        <location evidence="4">Cilium axoneme</location>
    </subcellularLocation>
    <subcellularLocation>
        <location evidence="1">Nucleus</location>
    </subcellularLocation>
</comment>
<comment type="disease" evidence="5 7">
    <disease id="DI-03233">
        <name>Meckel syndrome 10</name>
        <acronym>MKS10</acronym>
        <description>A disorder characterized by a combination of renal cysts and variably associated features including developmental anomalies of the central nervous system (typically encephalocele), hepatic ductal dysplasia and cysts, and polydactyly.</description>
        <dbReference type="MIM" id="614175"/>
    </disease>
    <text>The disease is caused by variants affecting the gene represented in this entry.</text>
</comment>
<comment type="disease" evidence="6">
    <disease id="DI-05148">
        <name>Joubert syndrome 34</name>
        <acronym>JBTS34</acronym>
        <description>A form of Joubert syndrome, a disorder presenting with cerebellar ataxia, oculomotor apraxia, hypotonia, neonatal breathing abnormalities and psychomotor delay. Neuroradiologically, it is characterized by cerebellar vermian hypoplasia/aplasia, thickened and reoriented superior cerebellar peduncles, and an abnormally large interpeduncular fossa, giving the appearance of a molar tooth on transaxial slices (molar tooth sign). Additional variable features include retinal dystrophy, renal disease, liver fibrosis, and polydactyly. JBTS34 inheritance is autosomal recessive.</description>
        <dbReference type="MIM" id="614175"/>
    </disease>
    <text>The disease is caused by variants affecting the gene represented in this entry.</text>
</comment>
<comment type="similarity">
    <text evidence="9">Belongs to the B9D family.</text>
</comment>
<accession>Q9BPU9</accession>